<dbReference type="EC" id="1.1.3.-" evidence="4"/>
<dbReference type="EMBL" id="ACGP01000115">
    <property type="protein sequence ID" value="EEI24763.1"/>
    <property type="molecule type" value="Genomic_DNA"/>
</dbReference>
<dbReference type="RefSeq" id="WP_003556662.1">
    <property type="nucleotide sequence ID" value="NZ_AZDF01000006.1"/>
</dbReference>
<dbReference type="SMR" id="C0XIJ3"/>
<dbReference type="PATRIC" id="fig|1423757.3.peg.2304"/>
<dbReference type="HOGENOM" id="CLU_020639_6_1_9"/>
<dbReference type="Proteomes" id="UP000003752">
    <property type="component" value="Unassembled WGS sequence"/>
</dbReference>
<dbReference type="GO" id="GO:0003973">
    <property type="term" value="F:(S)-2-hydroxy-acid oxidase activity"/>
    <property type="evidence" value="ECO:0007669"/>
    <property type="project" value="UniProtKB-EC"/>
</dbReference>
<dbReference type="GO" id="GO:0010181">
    <property type="term" value="F:FMN binding"/>
    <property type="evidence" value="ECO:0007669"/>
    <property type="project" value="InterPro"/>
</dbReference>
<dbReference type="CDD" id="cd04737">
    <property type="entry name" value="LOX_like_FMN"/>
    <property type="match status" value="1"/>
</dbReference>
<dbReference type="Gene3D" id="3.20.20.70">
    <property type="entry name" value="Aldolase class I"/>
    <property type="match status" value="1"/>
</dbReference>
<dbReference type="InterPro" id="IPR013785">
    <property type="entry name" value="Aldolase_TIM"/>
</dbReference>
<dbReference type="InterPro" id="IPR012133">
    <property type="entry name" value="Alpha-hydoxy_acid_DH_FMN"/>
</dbReference>
<dbReference type="InterPro" id="IPR000262">
    <property type="entry name" value="FMN-dep_DH"/>
</dbReference>
<dbReference type="InterPro" id="IPR037396">
    <property type="entry name" value="FMN_HAD"/>
</dbReference>
<dbReference type="InterPro" id="IPR008259">
    <property type="entry name" value="FMN_hydac_DH_AS"/>
</dbReference>
<dbReference type="PANTHER" id="PTHR10578:SF107">
    <property type="entry name" value="2-HYDROXYACID OXIDASE 1"/>
    <property type="match status" value="1"/>
</dbReference>
<dbReference type="PANTHER" id="PTHR10578">
    <property type="entry name" value="S -2-HYDROXY-ACID OXIDASE-RELATED"/>
    <property type="match status" value="1"/>
</dbReference>
<dbReference type="Pfam" id="PF01070">
    <property type="entry name" value="FMN_dh"/>
    <property type="match status" value="1"/>
</dbReference>
<dbReference type="PIRSF" id="PIRSF000138">
    <property type="entry name" value="Al-hdrx_acd_dh"/>
    <property type="match status" value="1"/>
</dbReference>
<dbReference type="SUPFAM" id="SSF51395">
    <property type="entry name" value="FMN-linked oxidoreductases"/>
    <property type="match status" value="1"/>
</dbReference>
<dbReference type="PROSITE" id="PS00557">
    <property type="entry name" value="FMN_HYDROXY_ACID_DH_1"/>
    <property type="match status" value="1"/>
</dbReference>
<dbReference type="PROSITE" id="PS51349">
    <property type="entry name" value="FMN_HYDROXY_ACID_DH_2"/>
    <property type="match status" value="1"/>
</dbReference>
<gene>
    <name evidence="6" type="primary">haox</name>
    <name evidence="6" type="ORF">HMPREF0519_1054</name>
</gene>
<proteinExistence type="evidence at protein level"/>
<accession>C0XIJ3</accession>
<reference key="1">
    <citation type="submission" date="2009-01" db="EMBL/GenBank/DDBJ databases">
        <authorList>
            <person name="Qin X."/>
            <person name="Bachman B."/>
            <person name="Battles P."/>
            <person name="Bell A."/>
            <person name="Bess C."/>
            <person name="Bickham C."/>
            <person name="Chaboub L."/>
            <person name="Chen D."/>
            <person name="Coyle M."/>
            <person name="Deiros D.R."/>
            <person name="Dinh H."/>
            <person name="Forbes L."/>
            <person name="Fowler G."/>
            <person name="Francisco L."/>
            <person name="Fu Q."/>
            <person name="Gubbala S."/>
            <person name="Hale W."/>
            <person name="Han Y."/>
            <person name="Hemphill L."/>
            <person name="Highlander S.K."/>
            <person name="Hirani K."/>
            <person name="Hogues M."/>
            <person name="Jackson L."/>
            <person name="Jakkamsetti A."/>
            <person name="Javaid M."/>
            <person name="Jiang H."/>
            <person name="Korchina V."/>
            <person name="Kovar C."/>
            <person name="Lara F."/>
            <person name="Lee S."/>
            <person name="Mata R."/>
            <person name="Mathew T."/>
            <person name="Moen C."/>
            <person name="Morales K."/>
            <person name="Munidasa M."/>
            <person name="Nazareth L."/>
            <person name="Ngo R."/>
            <person name="Nguyen L."/>
            <person name="Okwuonu G."/>
            <person name="Ongeri F."/>
            <person name="Patil S."/>
            <person name="Petrosino J."/>
            <person name="Pham C."/>
            <person name="Pham P."/>
            <person name="Pu L.-L."/>
            <person name="Puazo M."/>
            <person name="Raj R."/>
            <person name="Reid J."/>
            <person name="Rouhana J."/>
            <person name="Saada N."/>
            <person name="Shang Y."/>
            <person name="Simmons D."/>
            <person name="Thornton R."/>
            <person name="Warren J."/>
            <person name="Weissenberger G."/>
            <person name="Zhang J."/>
            <person name="Zhang L."/>
            <person name="Zhou C."/>
            <person name="Zhu D."/>
            <person name="Muzny D."/>
            <person name="Worley K."/>
            <person name="Gibbs R."/>
        </authorList>
    </citation>
    <scope>NUCLEOTIDE SEQUENCE [LARGE SCALE GENOMIC DNA]</scope>
    <source>
        <strain>ATCC 8290 / DSM 20176 / CCUG 30140 / JCM 1155 / KCTC 3500 / NBRC 15886 / NCIMB 8040 / NRRL B-1843 / 9</strain>
    </source>
</reference>
<reference key="2">
    <citation type="journal article" date="2021" name="PLoS Comput. Biol.">
        <title>Experimental and computational investigation of enzyme functional annotations uncovers misannotation in the EC 1.1.3.15 enzyme class.</title>
        <authorList>
            <person name="Rembeza E."/>
            <person name="Engqvist M.K.M."/>
        </authorList>
    </citation>
    <scope>FUNCTION</scope>
    <scope>CATALYTIC ACTIVITY</scope>
</reference>
<organism>
    <name type="scientific">Lentilactobacillus hilgardii (strain ATCC 8290 / DSM 20176 / CCUG 30140 / JCM 1155 / KCTC 3500 / NBRC 15886 / NCIMB 8040 / NRRL B-1843 / 9)</name>
    <dbReference type="NCBI Taxonomy" id="1423757"/>
    <lineage>
        <taxon>Bacteria</taxon>
        <taxon>Bacillati</taxon>
        <taxon>Bacillota</taxon>
        <taxon>Bacilli</taxon>
        <taxon>Lactobacillales</taxon>
        <taxon>Lactobacillaceae</taxon>
        <taxon>Lentilactobacillus</taxon>
    </lineage>
</organism>
<sequence>MVVVNGYKQNENEKKLNVLNLDQLEKQAKEIIPTGGFGYISGGSEDEWTLRENRRAFTHKQIVPRALTNIEKPELETNVFGIPLKTPLFMVPAAAQGLAHVKGEVDTAKGVAAVGGLMAQSTYSSTSIADTAASGTGAPQFFQLYMSKDWDFNEALLDEAKRAGVKGIILTVDATVDGYREADIINNFQFPIPMANLTKYSEDDGQGKGIAEIYASAAQKIGSDDVARIANYTDLPVIVKGIESPEDALYAIGAGASGIYVSNHGGRQLNGGPASFDVLEDVAKAVNGKVPVIFDSGIRRGSDVFKALASGADLVGIGRPVIYGLALGGAQGVQSVFEHLDHELEIIMQLAGTKTISDVKNAKLLNIRY</sequence>
<comment type="function">
    <text evidence="1 4">Catalyzes the oxidation of (S)-lactate (L-lactate) to pyruvate, with a reduction of O2 to H2O2 (PubMed:34555022). May be involved in the utilization of L-lactate as an energy source for growth (By similarity).</text>
</comment>
<comment type="catalytic activity">
    <reaction evidence="4">
        <text>(S)-lactate + O2 = pyruvate + H2O2</text>
        <dbReference type="Rhea" id="RHEA:55868"/>
        <dbReference type="ChEBI" id="CHEBI:15361"/>
        <dbReference type="ChEBI" id="CHEBI:15379"/>
        <dbReference type="ChEBI" id="CHEBI:16240"/>
        <dbReference type="ChEBI" id="CHEBI:16651"/>
    </reaction>
    <physiologicalReaction direction="left-to-right" evidence="5">
        <dbReference type="Rhea" id="RHEA:55869"/>
    </physiologicalReaction>
</comment>
<comment type="cofactor">
    <cofactor evidence="2">
        <name>FMN</name>
        <dbReference type="ChEBI" id="CHEBI:58210"/>
    </cofactor>
    <text evidence="2">Binds 1 FMN per subunit.</text>
</comment>
<comment type="subunit">
    <text evidence="2">Homotetramer.</text>
</comment>
<comment type="similarity">
    <text evidence="5">Belongs to the FMN-dependent alpha-hydroxy acid dehydrogenase family.</text>
</comment>
<feature type="chain" id="PRO_0000454871" description="L-lactate oxidase">
    <location>
        <begin position="1"/>
        <end position="369"/>
    </location>
</feature>
<feature type="domain" description="FMN hydroxy acid dehydrogenase" evidence="3">
    <location>
        <begin position="13"/>
        <end position="369"/>
    </location>
</feature>
<feature type="active site" description="Proton acceptor" evidence="2">
    <location>
        <position position="264"/>
    </location>
</feature>
<feature type="binding site" evidence="2">
    <location>
        <position position="39"/>
    </location>
    <ligand>
        <name>pyruvate</name>
        <dbReference type="ChEBI" id="CHEBI:15361"/>
    </ligand>
</feature>
<feature type="binding site" evidence="2">
    <location>
        <begin position="92"/>
        <end position="94"/>
    </location>
    <ligand>
        <name>FMN</name>
        <dbReference type="ChEBI" id="CHEBI:58210"/>
    </ligand>
</feature>
<feature type="binding site" evidence="2">
    <location>
        <position position="121"/>
    </location>
    <ligand>
        <name>FMN</name>
        <dbReference type="ChEBI" id="CHEBI:58210"/>
    </ligand>
</feature>
<feature type="binding site" evidence="2">
    <location>
        <position position="143"/>
    </location>
    <ligand>
        <name>FMN</name>
        <dbReference type="ChEBI" id="CHEBI:58210"/>
    </ligand>
</feature>
<feature type="binding site" evidence="2">
    <location>
        <position position="145"/>
    </location>
    <ligand>
        <name>pyruvate</name>
        <dbReference type="ChEBI" id="CHEBI:15361"/>
    </ligand>
</feature>
<feature type="binding site" evidence="2">
    <location>
        <position position="171"/>
    </location>
    <ligand>
        <name>FMN</name>
        <dbReference type="ChEBI" id="CHEBI:58210"/>
    </ligand>
</feature>
<feature type="binding site" evidence="2">
    <location>
        <position position="180"/>
    </location>
    <ligand>
        <name>pyruvate</name>
        <dbReference type="ChEBI" id="CHEBI:15361"/>
    </ligand>
</feature>
<feature type="binding site" evidence="2">
    <location>
        <position position="240"/>
    </location>
    <ligand>
        <name>FMN</name>
        <dbReference type="ChEBI" id="CHEBI:58210"/>
    </ligand>
</feature>
<feature type="binding site" evidence="2">
    <location>
        <position position="262"/>
    </location>
    <ligand>
        <name>FMN</name>
        <dbReference type="ChEBI" id="CHEBI:58210"/>
    </ligand>
</feature>
<feature type="binding site" evidence="2">
    <location>
        <position position="264"/>
    </location>
    <ligand>
        <name>pyruvate</name>
        <dbReference type="ChEBI" id="CHEBI:15361"/>
    </ligand>
</feature>
<feature type="binding site" evidence="2">
    <location>
        <position position="267"/>
    </location>
    <ligand>
        <name>pyruvate</name>
        <dbReference type="ChEBI" id="CHEBI:15361"/>
    </ligand>
</feature>
<feature type="binding site" evidence="2">
    <location>
        <begin position="295"/>
        <end position="299"/>
    </location>
    <ligand>
        <name>FMN</name>
        <dbReference type="ChEBI" id="CHEBI:58210"/>
    </ligand>
</feature>
<feature type="binding site" evidence="2">
    <location>
        <position position="319"/>
    </location>
    <ligand>
        <name>FMN</name>
        <dbReference type="ChEBI" id="CHEBI:58210"/>
    </ligand>
</feature>
<evidence type="ECO:0000250" key="1">
    <source>
        <dbReference type="UniProtKB" id="O33655"/>
    </source>
</evidence>
<evidence type="ECO:0000250" key="2">
    <source>
        <dbReference type="UniProtKB" id="Q44467"/>
    </source>
</evidence>
<evidence type="ECO:0000255" key="3">
    <source>
        <dbReference type="PROSITE-ProRule" id="PRU00683"/>
    </source>
</evidence>
<evidence type="ECO:0000269" key="4">
    <source>
    </source>
</evidence>
<evidence type="ECO:0000305" key="5"/>
<evidence type="ECO:0000312" key="6">
    <source>
        <dbReference type="EMBL" id="EEI24763.1"/>
    </source>
</evidence>
<protein>
    <recommendedName>
        <fullName evidence="5">L-lactate oxidase</fullName>
        <shortName evidence="5">LOX</shortName>
        <ecNumber evidence="4">1.1.3.-</ecNumber>
    </recommendedName>
</protein>
<keyword id="KW-0285">Flavoprotein</keyword>
<keyword id="KW-0288">FMN</keyword>
<keyword id="KW-0560">Oxidoreductase</keyword>
<keyword id="KW-1185">Reference proteome</keyword>
<name>LOX_LENH9</name>